<name>PMT9_ARATH</name>
<protein>
    <recommendedName>
        <fullName>Probable methyltransferase PMT9</fullName>
        <ecNumber>2.1.1.-</ecNumber>
    </recommendedName>
</protein>
<sequence>MKHFRTERVRATPKLFTYVLVGFIALLGLTCLYYGSSFAPGSRKSDEFDGSNNRVRTGIGSLRNRDIVLAVSRFEVPKSVPICDSRHSELIPCLDRNLHYQLKLKLNLSLMEHYEHHCPPSERRFNCLVPPPVGYKIPLRWPVSRDEVWKANIPHTHLAQEKSDQNWMVVNGDKINFPGGGTHFHNGADKYIVSLAQMLKFPGDKLNNGGSIRNVLDVGCGVASFGAYLLSHDIIAMSLAPNDVHQNQIQFALERGIPSTLGVLGTKRLPYPSRSFELAHCSRCRIDWLQRDGILLLELDRLLRPGGYFVYSSPEAYAHDPENRKIGNAMHDLFKRMCWKVVAKRDQSVIWGKPISNSCYLKRDPGVLPPLCPSGDDPDATWNVSMKACISPYSVRMHKERWSGLVPWPRRLTAPPPRLEEIGVTPEQFREDTETWRLRVIEYWKLLKPMVQKNSIRNVMDMSSNLGGFAAALNDKDVWVMNVMPVQSSPRMKIIYDRGLIGATHDWCEAFDTYPRTFDLIHAWNTFTETQARGCSFEDLLIEMDRILRPEGFVIIRDTTDNISYIKKYLTLLKWDKWSTETTPKGDPLSTKDEIVLIARKKLWSLPAISVS</sequence>
<evidence type="ECO:0000255" key="1"/>
<evidence type="ECO:0000305" key="2"/>
<comment type="subcellular location">
    <subcellularLocation>
        <location evidence="2">Golgi apparatus membrane</location>
        <topology evidence="2">Single-pass type II membrane protein</topology>
    </subcellularLocation>
</comment>
<comment type="alternative products">
    <event type="alternative splicing"/>
    <isoform>
        <id>Q8VZV7-1</id>
        <name>1</name>
        <sequence type="displayed"/>
    </isoform>
    <text>A number of isoforms are produced. According to EST sequences.</text>
</comment>
<comment type="similarity">
    <text evidence="2">Belongs to the methyltransferase superfamily.</text>
</comment>
<comment type="sequence caution" evidence="2">
    <conflict type="erroneous initiation">
        <sequence resource="EMBL-CDS" id="BAD95428"/>
    </conflict>
    <text>Truncated N-terminus.</text>
</comment>
<comment type="sequence caution" evidence="2">
    <conflict type="erroneous gene model prediction">
        <sequence resource="EMBL-CDS" id="CAB87782"/>
    </conflict>
</comment>
<gene>
    <name type="ordered locus">At5g14430</name>
    <name type="ORF">F18O22.220</name>
</gene>
<accession>Q8VZV7</accession>
<accession>Q56W07</accession>
<accession>Q9LY86</accession>
<feature type="chain" id="PRO_0000393249" description="Probable methyltransferase PMT9">
    <location>
        <begin position="1"/>
        <end position="612"/>
    </location>
</feature>
<feature type="topological domain" description="Cytoplasmic" evidence="1">
    <location>
        <begin position="1"/>
        <end position="14"/>
    </location>
</feature>
<feature type="transmembrane region" description="Helical; Signal-anchor for type II membrane protein" evidence="1">
    <location>
        <begin position="15"/>
        <end position="35"/>
    </location>
</feature>
<feature type="topological domain" description="Lumenal" evidence="1">
    <location>
        <begin position="36"/>
        <end position="612"/>
    </location>
</feature>
<feature type="glycosylation site" description="N-linked (GlcNAc...) asparagine" evidence="1">
    <location>
        <position position="107"/>
    </location>
</feature>
<feature type="glycosylation site" description="N-linked (GlcNAc...) asparagine" evidence="1">
    <location>
        <position position="383"/>
    </location>
</feature>
<feature type="glycosylation site" description="N-linked (GlcNAc...) asparagine" evidence="1">
    <location>
        <position position="562"/>
    </location>
</feature>
<proteinExistence type="evidence at transcript level"/>
<organism>
    <name type="scientific">Arabidopsis thaliana</name>
    <name type="common">Mouse-ear cress</name>
    <dbReference type="NCBI Taxonomy" id="3702"/>
    <lineage>
        <taxon>Eukaryota</taxon>
        <taxon>Viridiplantae</taxon>
        <taxon>Streptophyta</taxon>
        <taxon>Embryophyta</taxon>
        <taxon>Tracheophyta</taxon>
        <taxon>Spermatophyta</taxon>
        <taxon>Magnoliopsida</taxon>
        <taxon>eudicotyledons</taxon>
        <taxon>Gunneridae</taxon>
        <taxon>Pentapetalae</taxon>
        <taxon>rosids</taxon>
        <taxon>malvids</taxon>
        <taxon>Brassicales</taxon>
        <taxon>Brassicaceae</taxon>
        <taxon>Camelineae</taxon>
        <taxon>Arabidopsis</taxon>
    </lineage>
</organism>
<dbReference type="EC" id="2.1.1.-"/>
<dbReference type="EMBL" id="AL163817">
    <property type="protein sequence ID" value="CAB87782.1"/>
    <property type="status" value="ALT_SEQ"/>
    <property type="molecule type" value="Genomic_DNA"/>
</dbReference>
<dbReference type="EMBL" id="CP002688">
    <property type="protein sequence ID" value="AED92032.1"/>
    <property type="molecule type" value="Genomic_DNA"/>
</dbReference>
<dbReference type="EMBL" id="AY063807">
    <property type="protein sequence ID" value="AAL36163.1"/>
    <property type="molecule type" value="mRNA"/>
</dbReference>
<dbReference type="EMBL" id="AY113997">
    <property type="protein sequence ID" value="AAM45045.1"/>
    <property type="molecule type" value="mRNA"/>
</dbReference>
<dbReference type="EMBL" id="AK222240">
    <property type="protein sequence ID" value="BAD95428.1"/>
    <property type="status" value="ALT_INIT"/>
    <property type="molecule type" value="mRNA"/>
</dbReference>
<dbReference type="PIR" id="T48616">
    <property type="entry name" value="T48616"/>
</dbReference>
<dbReference type="RefSeq" id="NP_196947.2">
    <molecule id="Q8VZV7-1"/>
    <property type="nucleotide sequence ID" value="NM_121447.4"/>
</dbReference>
<dbReference type="BioGRID" id="16571">
    <property type="interactions" value="1"/>
</dbReference>
<dbReference type="FunCoup" id="Q8VZV7">
    <property type="interactions" value="1889"/>
</dbReference>
<dbReference type="STRING" id="3702.Q8VZV7"/>
<dbReference type="GlyGen" id="Q8VZV7">
    <property type="glycosylation" value="3 sites"/>
</dbReference>
<dbReference type="iPTMnet" id="Q8VZV7"/>
<dbReference type="PaxDb" id="3702-AT5G14430.1"/>
<dbReference type="ProteomicsDB" id="234882">
    <molecule id="Q8VZV7-1"/>
</dbReference>
<dbReference type="EnsemblPlants" id="AT5G14430.1">
    <molecule id="Q8VZV7-1"/>
    <property type="protein sequence ID" value="AT5G14430.1"/>
    <property type="gene ID" value="AT5G14430"/>
</dbReference>
<dbReference type="GeneID" id="831294"/>
<dbReference type="Gramene" id="AT5G14430.1">
    <molecule id="Q8VZV7-1"/>
    <property type="protein sequence ID" value="AT5G14430.1"/>
    <property type="gene ID" value="AT5G14430"/>
</dbReference>
<dbReference type="KEGG" id="ath:AT5G14430"/>
<dbReference type="Araport" id="AT5G14430"/>
<dbReference type="TAIR" id="AT5G14430"/>
<dbReference type="eggNOG" id="ENOG502QTWS">
    <property type="taxonomic scope" value="Eukaryota"/>
</dbReference>
<dbReference type="HOGENOM" id="CLU_010485_2_4_1"/>
<dbReference type="InParanoid" id="Q8VZV7"/>
<dbReference type="OrthoDB" id="2013972at2759"/>
<dbReference type="PhylomeDB" id="Q8VZV7"/>
<dbReference type="PRO" id="PR:Q8VZV7"/>
<dbReference type="Proteomes" id="UP000006548">
    <property type="component" value="Chromosome 5"/>
</dbReference>
<dbReference type="ExpressionAtlas" id="Q8VZV7">
    <property type="expression patterns" value="baseline and differential"/>
</dbReference>
<dbReference type="GO" id="GO:0005768">
    <property type="term" value="C:endosome"/>
    <property type="evidence" value="ECO:0007005"/>
    <property type="project" value="TAIR"/>
</dbReference>
<dbReference type="GO" id="GO:0005794">
    <property type="term" value="C:Golgi apparatus"/>
    <property type="evidence" value="ECO:0007005"/>
    <property type="project" value="TAIR"/>
</dbReference>
<dbReference type="GO" id="GO:0000137">
    <property type="term" value="C:Golgi cis cisterna"/>
    <property type="evidence" value="ECO:0007005"/>
    <property type="project" value="TAIR"/>
</dbReference>
<dbReference type="GO" id="GO:0000139">
    <property type="term" value="C:Golgi membrane"/>
    <property type="evidence" value="ECO:0007669"/>
    <property type="project" value="UniProtKB-SubCell"/>
</dbReference>
<dbReference type="GO" id="GO:0009505">
    <property type="term" value="C:plant-type cell wall"/>
    <property type="evidence" value="ECO:0007005"/>
    <property type="project" value="TAIR"/>
</dbReference>
<dbReference type="GO" id="GO:0000325">
    <property type="term" value="C:plant-type vacuole"/>
    <property type="evidence" value="ECO:0007005"/>
    <property type="project" value="TAIR"/>
</dbReference>
<dbReference type="GO" id="GO:0005802">
    <property type="term" value="C:trans-Golgi network"/>
    <property type="evidence" value="ECO:0007005"/>
    <property type="project" value="TAIR"/>
</dbReference>
<dbReference type="GO" id="GO:0008168">
    <property type="term" value="F:methyltransferase activity"/>
    <property type="evidence" value="ECO:0007669"/>
    <property type="project" value="UniProtKB-KW"/>
</dbReference>
<dbReference type="GO" id="GO:0032259">
    <property type="term" value="P:methylation"/>
    <property type="evidence" value="ECO:0007669"/>
    <property type="project" value="UniProtKB-KW"/>
</dbReference>
<dbReference type="FunFam" id="3.40.50.150:FF:000043">
    <property type="entry name" value="probable methyltransferase PMT3"/>
    <property type="match status" value="1"/>
</dbReference>
<dbReference type="Gene3D" id="3.40.50.150">
    <property type="entry name" value="Vaccinia Virus protein VP39"/>
    <property type="match status" value="1"/>
</dbReference>
<dbReference type="InterPro" id="IPR004159">
    <property type="entry name" value="Put_SAM_MeTrfase"/>
</dbReference>
<dbReference type="InterPro" id="IPR029063">
    <property type="entry name" value="SAM-dependent_MTases_sf"/>
</dbReference>
<dbReference type="PANTHER" id="PTHR10108:SF1103">
    <property type="entry name" value="METHYLTRANSFERASE PMT9-RELATED"/>
    <property type="match status" value="1"/>
</dbReference>
<dbReference type="PANTHER" id="PTHR10108">
    <property type="entry name" value="SAM-DEPENDENT METHYLTRANSFERASE"/>
    <property type="match status" value="1"/>
</dbReference>
<dbReference type="Pfam" id="PF03141">
    <property type="entry name" value="Methyltransf_29"/>
    <property type="match status" value="1"/>
</dbReference>
<dbReference type="SUPFAM" id="SSF53335">
    <property type="entry name" value="S-adenosyl-L-methionine-dependent methyltransferases"/>
    <property type="match status" value="2"/>
</dbReference>
<reference key="1">
    <citation type="journal article" date="2000" name="Nature">
        <title>Sequence and analysis of chromosome 5 of the plant Arabidopsis thaliana.</title>
        <authorList>
            <person name="Tabata S."/>
            <person name="Kaneko T."/>
            <person name="Nakamura Y."/>
            <person name="Kotani H."/>
            <person name="Kato T."/>
            <person name="Asamizu E."/>
            <person name="Miyajima N."/>
            <person name="Sasamoto S."/>
            <person name="Kimura T."/>
            <person name="Hosouchi T."/>
            <person name="Kawashima K."/>
            <person name="Kohara M."/>
            <person name="Matsumoto M."/>
            <person name="Matsuno A."/>
            <person name="Muraki A."/>
            <person name="Nakayama S."/>
            <person name="Nakazaki N."/>
            <person name="Naruo K."/>
            <person name="Okumura S."/>
            <person name="Shinpo S."/>
            <person name="Takeuchi C."/>
            <person name="Wada T."/>
            <person name="Watanabe A."/>
            <person name="Yamada M."/>
            <person name="Yasuda M."/>
            <person name="Sato S."/>
            <person name="de la Bastide M."/>
            <person name="Huang E."/>
            <person name="Spiegel L."/>
            <person name="Gnoj L."/>
            <person name="O'Shaughnessy A."/>
            <person name="Preston R."/>
            <person name="Habermann K."/>
            <person name="Murray J."/>
            <person name="Johnson D."/>
            <person name="Rohlfing T."/>
            <person name="Nelson J."/>
            <person name="Stoneking T."/>
            <person name="Pepin K."/>
            <person name="Spieth J."/>
            <person name="Sekhon M."/>
            <person name="Armstrong J."/>
            <person name="Becker M."/>
            <person name="Belter E."/>
            <person name="Cordum H."/>
            <person name="Cordes M."/>
            <person name="Courtney L."/>
            <person name="Courtney W."/>
            <person name="Dante M."/>
            <person name="Du H."/>
            <person name="Edwards J."/>
            <person name="Fryman J."/>
            <person name="Haakensen B."/>
            <person name="Lamar E."/>
            <person name="Latreille P."/>
            <person name="Leonard S."/>
            <person name="Meyer R."/>
            <person name="Mulvaney E."/>
            <person name="Ozersky P."/>
            <person name="Riley A."/>
            <person name="Strowmatt C."/>
            <person name="Wagner-McPherson C."/>
            <person name="Wollam A."/>
            <person name="Yoakum M."/>
            <person name="Bell M."/>
            <person name="Dedhia N."/>
            <person name="Parnell L."/>
            <person name="Shah R."/>
            <person name="Rodriguez M."/>
            <person name="Hoon See L."/>
            <person name="Vil D."/>
            <person name="Baker J."/>
            <person name="Kirchoff K."/>
            <person name="Toth K."/>
            <person name="King L."/>
            <person name="Bahret A."/>
            <person name="Miller B."/>
            <person name="Marra M.A."/>
            <person name="Martienssen R."/>
            <person name="McCombie W.R."/>
            <person name="Wilson R.K."/>
            <person name="Murphy G."/>
            <person name="Bancroft I."/>
            <person name="Volckaert G."/>
            <person name="Wambutt R."/>
            <person name="Duesterhoeft A."/>
            <person name="Stiekema W."/>
            <person name="Pohl T."/>
            <person name="Entian K.-D."/>
            <person name="Terryn N."/>
            <person name="Hartley N."/>
            <person name="Bent E."/>
            <person name="Johnson S."/>
            <person name="Langham S.-A."/>
            <person name="McCullagh B."/>
            <person name="Robben J."/>
            <person name="Grymonprez B."/>
            <person name="Zimmermann W."/>
            <person name="Ramsperger U."/>
            <person name="Wedler H."/>
            <person name="Balke K."/>
            <person name="Wedler E."/>
            <person name="Peters S."/>
            <person name="van Staveren M."/>
            <person name="Dirkse W."/>
            <person name="Mooijman P."/>
            <person name="Klein Lankhorst R."/>
            <person name="Weitzenegger T."/>
            <person name="Bothe G."/>
            <person name="Rose M."/>
            <person name="Hauf J."/>
            <person name="Berneiser S."/>
            <person name="Hempel S."/>
            <person name="Feldpausch M."/>
            <person name="Lamberth S."/>
            <person name="Villarroel R."/>
            <person name="Gielen J."/>
            <person name="Ardiles W."/>
            <person name="Bents O."/>
            <person name="Lemcke K."/>
            <person name="Kolesov G."/>
            <person name="Mayer K.F.X."/>
            <person name="Rudd S."/>
            <person name="Schoof H."/>
            <person name="Schueller C."/>
            <person name="Zaccaria P."/>
            <person name="Mewes H.-W."/>
            <person name="Bevan M."/>
            <person name="Fransz P.F."/>
        </authorList>
    </citation>
    <scope>NUCLEOTIDE SEQUENCE [LARGE SCALE GENOMIC DNA]</scope>
    <source>
        <strain>cv. Columbia</strain>
    </source>
</reference>
<reference key="2">
    <citation type="journal article" date="2017" name="Plant J.">
        <title>Araport11: a complete reannotation of the Arabidopsis thaliana reference genome.</title>
        <authorList>
            <person name="Cheng C.Y."/>
            <person name="Krishnakumar V."/>
            <person name="Chan A.P."/>
            <person name="Thibaud-Nissen F."/>
            <person name="Schobel S."/>
            <person name="Town C.D."/>
        </authorList>
    </citation>
    <scope>GENOME REANNOTATION</scope>
    <source>
        <strain>cv. Columbia</strain>
    </source>
</reference>
<reference key="3">
    <citation type="journal article" date="2003" name="Science">
        <title>Empirical analysis of transcriptional activity in the Arabidopsis genome.</title>
        <authorList>
            <person name="Yamada K."/>
            <person name="Lim J."/>
            <person name="Dale J.M."/>
            <person name="Chen H."/>
            <person name="Shinn P."/>
            <person name="Palm C.J."/>
            <person name="Southwick A.M."/>
            <person name="Wu H.C."/>
            <person name="Kim C.J."/>
            <person name="Nguyen M."/>
            <person name="Pham P.K."/>
            <person name="Cheuk R.F."/>
            <person name="Karlin-Newmann G."/>
            <person name="Liu S.X."/>
            <person name="Lam B."/>
            <person name="Sakano H."/>
            <person name="Wu T."/>
            <person name="Yu G."/>
            <person name="Miranda M."/>
            <person name="Quach H.L."/>
            <person name="Tripp M."/>
            <person name="Chang C.H."/>
            <person name="Lee J.M."/>
            <person name="Toriumi M.J."/>
            <person name="Chan M.M."/>
            <person name="Tang C.C."/>
            <person name="Onodera C.S."/>
            <person name="Deng J.M."/>
            <person name="Akiyama K."/>
            <person name="Ansari Y."/>
            <person name="Arakawa T."/>
            <person name="Banh J."/>
            <person name="Banno F."/>
            <person name="Bowser L."/>
            <person name="Brooks S.Y."/>
            <person name="Carninci P."/>
            <person name="Chao Q."/>
            <person name="Choy N."/>
            <person name="Enju A."/>
            <person name="Goldsmith A.D."/>
            <person name="Gurjal M."/>
            <person name="Hansen N.F."/>
            <person name="Hayashizaki Y."/>
            <person name="Johnson-Hopson C."/>
            <person name="Hsuan V.W."/>
            <person name="Iida K."/>
            <person name="Karnes M."/>
            <person name="Khan S."/>
            <person name="Koesema E."/>
            <person name="Ishida J."/>
            <person name="Jiang P.X."/>
            <person name="Jones T."/>
            <person name="Kawai J."/>
            <person name="Kamiya A."/>
            <person name="Meyers C."/>
            <person name="Nakajima M."/>
            <person name="Narusaka M."/>
            <person name="Seki M."/>
            <person name="Sakurai T."/>
            <person name="Satou M."/>
            <person name="Tamse R."/>
            <person name="Vaysberg M."/>
            <person name="Wallender E.K."/>
            <person name="Wong C."/>
            <person name="Yamamura Y."/>
            <person name="Yuan S."/>
            <person name="Shinozaki K."/>
            <person name="Davis R.W."/>
            <person name="Theologis A."/>
            <person name="Ecker J.R."/>
        </authorList>
    </citation>
    <scope>NUCLEOTIDE SEQUENCE [LARGE SCALE MRNA]</scope>
    <source>
        <strain>cv. Columbia</strain>
    </source>
</reference>
<reference key="4">
    <citation type="submission" date="2005-03" db="EMBL/GenBank/DDBJ databases">
        <title>Large-scale analysis of RIKEN Arabidopsis full-length (RAFL) cDNAs.</title>
        <authorList>
            <person name="Totoki Y."/>
            <person name="Seki M."/>
            <person name="Ishida J."/>
            <person name="Nakajima M."/>
            <person name="Enju A."/>
            <person name="Kamiya A."/>
            <person name="Narusaka M."/>
            <person name="Shin-i T."/>
            <person name="Nakagawa M."/>
            <person name="Sakamoto N."/>
            <person name="Oishi K."/>
            <person name="Kohara Y."/>
            <person name="Kobayashi M."/>
            <person name="Toyoda A."/>
            <person name="Sakaki Y."/>
            <person name="Sakurai T."/>
            <person name="Iida K."/>
            <person name="Akiyama K."/>
            <person name="Satou M."/>
            <person name="Toyoda T."/>
            <person name="Konagaya A."/>
            <person name="Carninci P."/>
            <person name="Kawai J."/>
            <person name="Hayashizaki Y."/>
            <person name="Shinozaki K."/>
        </authorList>
    </citation>
    <scope>NUCLEOTIDE SEQUENCE [LARGE SCALE MRNA] OF 216-612</scope>
    <source>
        <strain>cv. Columbia</strain>
    </source>
</reference>
<reference key="5">
    <citation type="journal article" date="2007" name="Plant J.">
        <title>The TUMOROUS SHOOT DEVELOPMENT2 gene of Arabidopsis encoding a putative methyltransferase is required for cell adhesion and co-ordinated plant development.</title>
        <authorList>
            <person name="Krupkova E."/>
            <person name="Immerzeel P."/>
            <person name="Pauly M."/>
            <person name="Schmulling T."/>
        </authorList>
    </citation>
    <scope>GENE FAMILY</scope>
</reference>
<keyword id="KW-0025">Alternative splicing</keyword>
<keyword id="KW-0325">Glycoprotein</keyword>
<keyword id="KW-0333">Golgi apparatus</keyword>
<keyword id="KW-0472">Membrane</keyword>
<keyword id="KW-0489">Methyltransferase</keyword>
<keyword id="KW-1185">Reference proteome</keyword>
<keyword id="KW-0735">Signal-anchor</keyword>
<keyword id="KW-0808">Transferase</keyword>
<keyword id="KW-0812">Transmembrane</keyword>
<keyword id="KW-1133">Transmembrane helix</keyword>